<gene>
    <name evidence="1" type="primary">guaA</name>
    <name type="ordered locus">BCI_0650</name>
</gene>
<keyword id="KW-0067">ATP-binding</keyword>
<keyword id="KW-0315">Glutamine amidotransferase</keyword>
<keyword id="KW-0332">GMP biosynthesis</keyword>
<keyword id="KW-0436">Ligase</keyword>
<keyword id="KW-0547">Nucleotide-binding</keyword>
<keyword id="KW-0658">Purine biosynthesis</keyword>
<keyword id="KW-1185">Reference proteome</keyword>
<dbReference type="EC" id="6.3.5.2" evidence="1"/>
<dbReference type="EMBL" id="CP000238">
    <property type="protein sequence ID" value="ABF13795.1"/>
    <property type="molecule type" value="Genomic_DNA"/>
</dbReference>
<dbReference type="RefSeq" id="WP_011520806.1">
    <property type="nucleotide sequence ID" value="NC_007984.1"/>
</dbReference>
<dbReference type="SMR" id="Q1LSJ1"/>
<dbReference type="STRING" id="374463.BCI_0650"/>
<dbReference type="KEGG" id="bci:BCI_0650"/>
<dbReference type="HOGENOM" id="CLU_014340_0_5_6"/>
<dbReference type="OrthoDB" id="9802219at2"/>
<dbReference type="UniPathway" id="UPA00189">
    <property type="reaction ID" value="UER00296"/>
</dbReference>
<dbReference type="Proteomes" id="UP000002427">
    <property type="component" value="Chromosome"/>
</dbReference>
<dbReference type="GO" id="GO:0005829">
    <property type="term" value="C:cytosol"/>
    <property type="evidence" value="ECO:0007669"/>
    <property type="project" value="TreeGrafter"/>
</dbReference>
<dbReference type="GO" id="GO:0005524">
    <property type="term" value="F:ATP binding"/>
    <property type="evidence" value="ECO:0007669"/>
    <property type="project" value="UniProtKB-UniRule"/>
</dbReference>
<dbReference type="GO" id="GO:0003921">
    <property type="term" value="F:GMP synthase activity"/>
    <property type="evidence" value="ECO:0007669"/>
    <property type="project" value="InterPro"/>
</dbReference>
<dbReference type="CDD" id="cd01742">
    <property type="entry name" value="GATase1_GMP_Synthase"/>
    <property type="match status" value="1"/>
</dbReference>
<dbReference type="CDD" id="cd01997">
    <property type="entry name" value="GMP_synthase_C"/>
    <property type="match status" value="1"/>
</dbReference>
<dbReference type="FunFam" id="3.30.300.10:FF:000002">
    <property type="entry name" value="GMP synthase [glutamine-hydrolyzing]"/>
    <property type="match status" value="1"/>
</dbReference>
<dbReference type="FunFam" id="3.40.50.620:FF:000001">
    <property type="entry name" value="GMP synthase [glutamine-hydrolyzing]"/>
    <property type="match status" value="1"/>
</dbReference>
<dbReference type="FunFam" id="3.40.50.880:FF:000001">
    <property type="entry name" value="GMP synthase [glutamine-hydrolyzing]"/>
    <property type="match status" value="1"/>
</dbReference>
<dbReference type="Gene3D" id="3.30.300.10">
    <property type="match status" value="1"/>
</dbReference>
<dbReference type="Gene3D" id="3.40.50.880">
    <property type="match status" value="1"/>
</dbReference>
<dbReference type="Gene3D" id="3.40.50.620">
    <property type="entry name" value="HUPs"/>
    <property type="match status" value="1"/>
</dbReference>
<dbReference type="HAMAP" id="MF_00344">
    <property type="entry name" value="GMP_synthase"/>
    <property type="match status" value="1"/>
</dbReference>
<dbReference type="InterPro" id="IPR029062">
    <property type="entry name" value="Class_I_gatase-like"/>
</dbReference>
<dbReference type="InterPro" id="IPR017926">
    <property type="entry name" value="GATASE"/>
</dbReference>
<dbReference type="InterPro" id="IPR001674">
    <property type="entry name" value="GMP_synth_C"/>
</dbReference>
<dbReference type="InterPro" id="IPR004739">
    <property type="entry name" value="GMP_synth_GATase"/>
</dbReference>
<dbReference type="InterPro" id="IPR022955">
    <property type="entry name" value="GMP_synthase"/>
</dbReference>
<dbReference type="InterPro" id="IPR025777">
    <property type="entry name" value="GMPS_ATP_PPase_dom"/>
</dbReference>
<dbReference type="InterPro" id="IPR022310">
    <property type="entry name" value="NAD/GMP_synthase"/>
</dbReference>
<dbReference type="InterPro" id="IPR014729">
    <property type="entry name" value="Rossmann-like_a/b/a_fold"/>
</dbReference>
<dbReference type="NCBIfam" id="TIGR00884">
    <property type="entry name" value="guaA_Cterm"/>
    <property type="match status" value="1"/>
</dbReference>
<dbReference type="NCBIfam" id="TIGR00888">
    <property type="entry name" value="guaA_Nterm"/>
    <property type="match status" value="1"/>
</dbReference>
<dbReference type="NCBIfam" id="NF000848">
    <property type="entry name" value="PRK00074.1"/>
    <property type="match status" value="1"/>
</dbReference>
<dbReference type="PANTHER" id="PTHR11922:SF2">
    <property type="entry name" value="GMP SYNTHASE [GLUTAMINE-HYDROLYZING]"/>
    <property type="match status" value="1"/>
</dbReference>
<dbReference type="PANTHER" id="PTHR11922">
    <property type="entry name" value="GMP SYNTHASE-RELATED"/>
    <property type="match status" value="1"/>
</dbReference>
<dbReference type="Pfam" id="PF00117">
    <property type="entry name" value="GATase"/>
    <property type="match status" value="1"/>
</dbReference>
<dbReference type="Pfam" id="PF00958">
    <property type="entry name" value="GMP_synt_C"/>
    <property type="match status" value="1"/>
</dbReference>
<dbReference type="Pfam" id="PF02540">
    <property type="entry name" value="NAD_synthase"/>
    <property type="match status" value="1"/>
</dbReference>
<dbReference type="PRINTS" id="PR00097">
    <property type="entry name" value="ANTSNTHASEII"/>
</dbReference>
<dbReference type="PRINTS" id="PR00096">
    <property type="entry name" value="GATASE"/>
</dbReference>
<dbReference type="SUPFAM" id="SSF52402">
    <property type="entry name" value="Adenine nucleotide alpha hydrolases-like"/>
    <property type="match status" value="1"/>
</dbReference>
<dbReference type="SUPFAM" id="SSF52317">
    <property type="entry name" value="Class I glutamine amidotransferase-like"/>
    <property type="match status" value="1"/>
</dbReference>
<dbReference type="SUPFAM" id="SSF54810">
    <property type="entry name" value="GMP synthetase C-terminal dimerisation domain"/>
    <property type="match status" value="1"/>
</dbReference>
<dbReference type="PROSITE" id="PS51273">
    <property type="entry name" value="GATASE_TYPE_1"/>
    <property type="match status" value="1"/>
</dbReference>
<dbReference type="PROSITE" id="PS51553">
    <property type="entry name" value="GMPS_ATP_PPASE"/>
    <property type="match status" value="1"/>
</dbReference>
<organism>
    <name type="scientific">Baumannia cicadellinicola subsp. Homalodisca coagulata</name>
    <dbReference type="NCBI Taxonomy" id="374463"/>
    <lineage>
        <taxon>Bacteria</taxon>
        <taxon>Pseudomonadati</taxon>
        <taxon>Pseudomonadota</taxon>
        <taxon>Gammaproteobacteria</taxon>
        <taxon>Candidatus Palibaumannia</taxon>
    </lineage>
</organism>
<feature type="chain" id="PRO_1000133352" description="GMP synthase [glutamine-hydrolyzing]">
    <location>
        <begin position="1"/>
        <end position="526"/>
    </location>
</feature>
<feature type="domain" description="Glutamine amidotransferase type-1" evidence="1">
    <location>
        <begin position="9"/>
        <end position="207"/>
    </location>
</feature>
<feature type="domain" description="GMPS ATP-PPase" evidence="1">
    <location>
        <begin position="208"/>
        <end position="401"/>
    </location>
</feature>
<feature type="active site" description="Nucleophile" evidence="1">
    <location>
        <position position="86"/>
    </location>
</feature>
<feature type="active site" evidence="1">
    <location>
        <position position="181"/>
    </location>
</feature>
<feature type="active site" evidence="1">
    <location>
        <position position="183"/>
    </location>
</feature>
<feature type="binding site" evidence="1">
    <location>
        <begin position="235"/>
        <end position="241"/>
    </location>
    <ligand>
        <name>ATP</name>
        <dbReference type="ChEBI" id="CHEBI:30616"/>
    </ligand>
</feature>
<reference key="1">
    <citation type="journal article" date="2006" name="PLoS Biol.">
        <title>Metabolic complementarity and genomics of the dual bacterial symbiosis of sharpshooters.</title>
        <authorList>
            <person name="Wu D."/>
            <person name="Daugherty S.C."/>
            <person name="Van Aken S.E."/>
            <person name="Pai G.H."/>
            <person name="Watkins K.L."/>
            <person name="Khouri H."/>
            <person name="Tallon L.J."/>
            <person name="Zaborsky J.M."/>
            <person name="Dunbar H.E."/>
            <person name="Tran P.L."/>
            <person name="Moran N.A."/>
            <person name="Eisen J.A."/>
        </authorList>
    </citation>
    <scope>NUCLEOTIDE SEQUENCE [LARGE SCALE GENOMIC DNA]</scope>
</reference>
<evidence type="ECO:0000255" key="1">
    <source>
        <dbReference type="HAMAP-Rule" id="MF_00344"/>
    </source>
</evidence>
<protein>
    <recommendedName>
        <fullName evidence="1">GMP synthase [glutamine-hydrolyzing]</fullName>
        <ecNumber evidence="1">6.3.5.2</ecNumber>
    </recommendedName>
    <alternativeName>
        <fullName evidence="1">GMP synthetase</fullName>
    </alternativeName>
    <alternativeName>
        <fullName evidence="1">Glutamine amidotransferase</fullName>
    </alternativeName>
</protein>
<sequence length="526" mass="59472">MIENIYTSRILILNFGSQYAQLLVRRVRELGVYCELRAWDITEAQIREFAPNGIILSGGPESTLTIDSPRASPYIFMAGVPVLGVCYGMQTIAIQLGGKVNQDMLRREFGYAQVVIIADSPLTRNIQDLINNNQPILNVWMSHSDNITSIPPDFIIVGRTTTCPFAIIANEKKRFYGIQFHPEVTHTCQGHNILKRFVLDICSCQGRWTPNNIKENIINHIKEQVGKENVVLGLSGGVDSTVTAMLLHYAIGVNLTCIFIDNGLLRYNEASNIREIFSKNLSLNIIYVRSEDRFLRALAGIYNPEEKRKIIGRLFSEIFEEQARSLTKTATWLAQGTIYPDIIESAISHVSLTNVIKSHHNVGGLPNTLNLKLIEPLKNLFKDEVRKIGLELGLPFHMLYRHPFPGPGLGIRILGEVKKEDCDLLRKADLIFIEELYKAKLYYKVSQAFAVLLPIYSVGVMGDSRKYERVISLRAVETIDFMTANWSHLSYDFLELVSNRIINEIDGISRVVYDISGKPPATIEWE</sequence>
<proteinExistence type="inferred from homology"/>
<accession>Q1LSJ1</accession>
<comment type="function">
    <text evidence="1">Catalyzes the synthesis of GMP from XMP.</text>
</comment>
<comment type="catalytic activity">
    <reaction evidence="1">
        <text>XMP + L-glutamine + ATP + H2O = GMP + L-glutamate + AMP + diphosphate + 2 H(+)</text>
        <dbReference type="Rhea" id="RHEA:11680"/>
        <dbReference type="ChEBI" id="CHEBI:15377"/>
        <dbReference type="ChEBI" id="CHEBI:15378"/>
        <dbReference type="ChEBI" id="CHEBI:29985"/>
        <dbReference type="ChEBI" id="CHEBI:30616"/>
        <dbReference type="ChEBI" id="CHEBI:33019"/>
        <dbReference type="ChEBI" id="CHEBI:57464"/>
        <dbReference type="ChEBI" id="CHEBI:58115"/>
        <dbReference type="ChEBI" id="CHEBI:58359"/>
        <dbReference type="ChEBI" id="CHEBI:456215"/>
        <dbReference type="EC" id="6.3.5.2"/>
    </reaction>
</comment>
<comment type="pathway">
    <text evidence="1">Purine metabolism; GMP biosynthesis; GMP from XMP (L-Gln route): step 1/1.</text>
</comment>
<comment type="subunit">
    <text evidence="1">Homodimer.</text>
</comment>
<name>GUAA_BAUCH</name>